<proteinExistence type="inferred from homology"/>
<feature type="chain" id="PRO_0000318243" description="Protein-export protein SecB">
    <location>
        <begin position="1"/>
        <end position="155"/>
    </location>
</feature>
<keyword id="KW-0143">Chaperone</keyword>
<keyword id="KW-0963">Cytoplasm</keyword>
<keyword id="KW-0653">Protein transport</keyword>
<keyword id="KW-0811">Translocation</keyword>
<keyword id="KW-0813">Transport</keyword>
<name>SECB_PARM1</name>
<comment type="function">
    <text evidence="1">One of the proteins required for the normal export of preproteins out of the cell cytoplasm. It is a molecular chaperone that binds to a subset of precursor proteins, maintaining them in a translocation-competent state. It also specifically binds to its receptor SecA.</text>
</comment>
<comment type="subunit">
    <text evidence="1">Homotetramer, a dimer of dimers. One homotetramer interacts with 1 SecA dimer.</text>
</comment>
<comment type="subcellular location">
    <subcellularLocation>
        <location evidence="1">Cytoplasm</location>
    </subcellularLocation>
</comment>
<comment type="similarity">
    <text evidence="1">Belongs to the SecB family.</text>
</comment>
<organism>
    <name type="scientific">Paramagnetospirillum magneticum (strain ATCC 700264 / AMB-1)</name>
    <name type="common">Magnetospirillum magneticum</name>
    <dbReference type="NCBI Taxonomy" id="342108"/>
    <lineage>
        <taxon>Bacteria</taxon>
        <taxon>Pseudomonadati</taxon>
        <taxon>Pseudomonadota</taxon>
        <taxon>Alphaproteobacteria</taxon>
        <taxon>Rhodospirillales</taxon>
        <taxon>Magnetospirillaceae</taxon>
        <taxon>Paramagnetospirillum</taxon>
    </lineage>
</organism>
<reference key="1">
    <citation type="journal article" date="2005" name="DNA Res.">
        <title>Complete genome sequence of the facultative anaerobic magnetotactic bacterium Magnetospirillum sp. strain AMB-1.</title>
        <authorList>
            <person name="Matsunaga T."/>
            <person name="Okamura Y."/>
            <person name="Fukuda Y."/>
            <person name="Wahyudi A.T."/>
            <person name="Murase Y."/>
            <person name="Takeyama H."/>
        </authorList>
    </citation>
    <scope>NUCLEOTIDE SEQUENCE [LARGE SCALE GENOMIC DNA]</scope>
    <source>
        <strain>ATCC 700264 / AMB-1</strain>
    </source>
</reference>
<sequence length="155" mass="17186">MTDAQTPSEDLPQLQVNMQYIKDLSFEIPGAPHSFIEMQGKNPEIPIHVDVNVGNVGANAYEVVLHLKIEALLDGKALFILELAYAGVFTLNLPEEQIHPVLLIECPRLLFPFARNIVADMTRDGGLPPLLLQPLDFVELYRARAAEMNAQQGQA</sequence>
<gene>
    <name evidence="1" type="primary">secB</name>
    <name type="ordered locus">amb4544</name>
</gene>
<evidence type="ECO:0000255" key="1">
    <source>
        <dbReference type="HAMAP-Rule" id="MF_00821"/>
    </source>
</evidence>
<accession>Q2VYH7</accession>
<protein>
    <recommendedName>
        <fullName evidence="1">Protein-export protein SecB</fullName>
    </recommendedName>
</protein>
<dbReference type="EMBL" id="AP007255">
    <property type="protein sequence ID" value="BAE53348.1"/>
    <property type="molecule type" value="Genomic_DNA"/>
</dbReference>
<dbReference type="RefSeq" id="WP_011386888.1">
    <property type="nucleotide sequence ID" value="NC_007626.1"/>
</dbReference>
<dbReference type="SMR" id="Q2VYH7"/>
<dbReference type="STRING" id="342108.amb4544"/>
<dbReference type="KEGG" id="mag:amb4544"/>
<dbReference type="HOGENOM" id="CLU_111574_0_0_5"/>
<dbReference type="OrthoDB" id="9795145at2"/>
<dbReference type="Proteomes" id="UP000007058">
    <property type="component" value="Chromosome"/>
</dbReference>
<dbReference type="GO" id="GO:0005737">
    <property type="term" value="C:cytoplasm"/>
    <property type="evidence" value="ECO:0007669"/>
    <property type="project" value="UniProtKB-SubCell"/>
</dbReference>
<dbReference type="GO" id="GO:0051082">
    <property type="term" value="F:unfolded protein binding"/>
    <property type="evidence" value="ECO:0007669"/>
    <property type="project" value="InterPro"/>
</dbReference>
<dbReference type="GO" id="GO:0006457">
    <property type="term" value="P:protein folding"/>
    <property type="evidence" value="ECO:0007669"/>
    <property type="project" value="UniProtKB-UniRule"/>
</dbReference>
<dbReference type="GO" id="GO:0051262">
    <property type="term" value="P:protein tetramerization"/>
    <property type="evidence" value="ECO:0007669"/>
    <property type="project" value="InterPro"/>
</dbReference>
<dbReference type="GO" id="GO:0015031">
    <property type="term" value="P:protein transport"/>
    <property type="evidence" value="ECO:0007669"/>
    <property type="project" value="UniProtKB-UniRule"/>
</dbReference>
<dbReference type="Gene3D" id="3.10.420.10">
    <property type="entry name" value="SecB-like"/>
    <property type="match status" value="1"/>
</dbReference>
<dbReference type="HAMAP" id="MF_00821">
    <property type="entry name" value="SecB"/>
    <property type="match status" value="1"/>
</dbReference>
<dbReference type="InterPro" id="IPR003708">
    <property type="entry name" value="SecB"/>
</dbReference>
<dbReference type="InterPro" id="IPR035958">
    <property type="entry name" value="SecB-like_sf"/>
</dbReference>
<dbReference type="NCBIfam" id="NF004392">
    <property type="entry name" value="PRK05751.1-3"/>
    <property type="match status" value="1"/>
</dbReference>
<dbReference type="NCBIfam" id="TIGR00809">
    <property type="entry name" value="secB"/>
    <property type="match status" value="1"/>
</dbReference>
<dbReference type="PANTHER" id="PTHR36918">
    <property type="match status" value="1"/>
</dbReference>
<dbReference type="PANTHER" id="PTHR36918:SF1">
    <property type="entry name" value="PROTEIN-EXPORT PROTEIN SECB"/>
    <property type="match status" value="1"/>
</dbReference>
<dbReference type="Pfam" id="PF02556">
    <property type="entry name" value="SecB"/>
    <property type="match status" value="1"/>
</dbReference>
<dbReference type="PRINTS" id="PR01594">
    <property type="entry name" value="SECBCHAPRONE"/>
</dbReference>
<dbReference type="SUPFAM" id="SSF54611">
    <property type="entry name" value="SecB-like"/>
    <property type="match status" value="1"/>
</dbReference>